<protein>
    <recommendedName>
        <fullName evidence="1">Serine--tRNA ligase</fullName>
        <ecNumber evidence="1">6.1.1.11</ecNumber>
    </recommendedName>
    <alternativeName>
        <fullName evidence="1">Seryl-tRNA synthetase</fullName>
        <shortName evidence="1">SerRS</shortName>
    </alternativeName>
    <alternativeName>
        <fullName evidence="1">Seryl-tRNA(Ser/Sec) synthetase</fullName>
    </alternativeName>
</protein>
<proteinExistence type="inferred from homology"/>
<organism>
    <name type="scientific">Shewanella woodyi (strain ATCC 51908 / MS32)</name>
    <dbReference type="NCBI Taxonomy" id="392500"/>
    <lineage>
        <taxon>Bacteria</taxon>
        <taxon>Pseudomonadati</taxon>
        <taxon>Pseudomonadota</taxon>
        <taxon>Gammaproteobacteria</taxon>
        <taxon>Alteromonadales</taxon>
        <taxon>Shewanellaceae</taxon>
        <taxon>Shewanella</taxon>
    </lineage>
</organism>
<sequence>MLDPKFLRNELEATAESLATRGFILDVERLSKLEEKRKSLQVATEELQASRNAISKSIGQAKAKGEDVAPIMAQVGDLGSQLDSKKAELAELLEELNAIALSVPNLPDASAPIGKDESENVEVRRWGTIKEYGFEVKDHVELGETLGGLDFKSAVKITGSRFIIMKGQIARMHRALAQFMLDLHTTEHGYTETYVPLLVNEDSLMGTGQLPKFGEDLFHTKPATEEGQGLSLIPTAEVPLTNIARDTIIDEAELPVKLTAHTPCFRSEAGSYGRDTRGLIRQHQFDKVELVQLVKPEDSMAALDALTGHAEKVLEKLGLPYRTVILCTGDMGFGSSKTFDIEVWLPAQNTYREISSCSNMQDFQARRMQARYKAADAKKPALLHTLNGSGLAVGRTLVAVLENYQNEDGSITVPEVLRPYMGGLEKIG</sequence>
<feature type="chain" id="PRO_1000098124" description="Serine--tRNA ligase">
    <location>
        <begin position="1"/>
        <end position="428"/>
    </location>
</feature>
<feature type="binding site" evidence="1">
    <location>
        <begin position="235"/>
        <end position="237"/>
    </location>
    <ligand>
        <name>L-serine</name>
        <dbReference type="ChEBI" id="CHEBI:33384"/>
    </ligand>
</feature>
<feature type="binding site" evidence="1">
    <location>
        <begin position="266"/>
        <end position="268"/>
    </location>
    <ligand>
        <name>ATP</name>
        <dbReference type="ChEBI" id="CHEBI:30616"/>
    </ligand>
</feature>
<feature type="binding site" evidence="1">
    <location>
        <position position="289"/>
    </location>
    <ligand>
        <name>L-serine</name>
        <dbReference type="ChEBI" id="CHEBI:33384"/>
    </ligand>
</feature>
<feature type="binding site" evidence="1">
    <location>
        <begin position="353"/>
        <end position="356"/>
    </location>
    <ligand>
        <name>ATP</name>
        <dbReference type="ChEBI" id="CHEBI:30616"/>
    </ligand>
</feature>
<feature type="binding site" evidence="1">
    <location>
        <position position="389"/>
    </location>
    <ligand>
        <name>L-serine</name>
        <dbReference type="ChEBI" id="CHEBI:33384"/>
    </ligand>
</feature>
<comment type="function">
    <text evidence="1">Catalyzes the attachment of serine to tRNA(Ser). Is also able to aminoacylate tRNA(Sec) with serine, to form the misacylated tRNA L-seryl-tRNA(Sec), which will be further converted into selenocysteinyl-tRNA(Sec).</text>
</comment>
<comment type="catalytic activity">
    <reaction evidence="1">
        <text>tRNA(Ser) + L-serine + ATP = L-seryl-tRNA(Ser) + AMP + diphosphate + H(+)</text>
        <dbReference type="Rhea" id="RHEA:12292"/>
        <dbReference type="Rhea" id="RHEA-COMP:9669"/>
        <dbReference type="Rhea" id="RHEA-COMP:9703"/>
        <dbReference type="ChEBI" id="CHEBI:15378"/>
        <dbReference type="ChEBI" id="CHEBI:30616"/>
        <dbReference type="ChEBI" id="CHEBI:33019"/>
        <dbReference type="ChEBI" id="CHEBI:33384"/>
        <dbReference type="ChEBI" id="CHEBI:78442"/>
        <dbReference type="ChEBI" id="CHEBI:78533"/>
        <dbReference type="ChEBI" id="CHEBI:456215"/>
        <dbReference type="EC" id="6.1.1.11"/>
    </reaction>
</comment>
<comment type="catalytic activity">
    <reaction evidence="1">
        <text>tRNA(Sec) + L-serine + ATP = L-seryl-tRNA(Sec) + AMP + diphosphate + H(+)</text>
        <dbReference type="Rhea" id="RHEA:42580"/>
        <dbReference type="Rhea" id="RHEA-COMP:9742"/>
        <dbReference type="Rhea" id="RHEA-COMP:10128"/>
        <dbReference type="ChEBI" id="CHEBI:15378"/>
        <dbReference type="ChEBI" id="CHEBI:30616"/>
        <dbReference type="ChEBI" id="CHEBI:33019"/>
        <dbReference type="ChEBI" id="CHEBI:33384"/>
        <dbReference type="ChEBI" id="CHEBI:78442"/>
        <dbReference type="ChEBI" id="CHEBI:78533"/>
        <dbReference type="ChEBI" id="CHEBI:456215"/>
        <dbReference type="EC" id="6.1.1.11"/>
    </reaction>
</comment>
<comment type="pathway">
    <text evidence="1">Aminoacyl-tRNA biosynthesis; selenocysteinyl-tRNA(Sec) biosynthesis; L-seryl-tRNA(Sec) from L-serine and tRNA(Sec): step 1/1.</text>
</comment>
<comment type="subunit">
    <text evidence="1">Homodimer. The tRNA molecule binds across the dimer.</text>
</comment>
<comment type="subcellular location">
    <subcellularLocation>
        <location evidence="1">Cytoplasm</location>
    </subcellularLocation>
</comment>
<comment type="domain">
    <text evidence="1">Consists of two distinct domains, a catalytic core and a N-terminal extension that is involved in tRNA binding.</text>
</comment>
<comment type="similarity">
    <text evidence="1">Belongs to the class-II aminoacyl-tRNA synthetase family. Type-1 seryl-tRNA synthetase subfamily.</text>
</comment>
<name>SYS_SHEWM</name>
<gene>
    <name evidence="1" type="primary">serS</name>
    <name type="ordered locus">Swoo_2479</name>
</gene>
<accession>B1KG49</accession>
<keyword id="KW-0030">Aminoacyl-tRNA synthetase</keyword>
<keyword id="KW-0067">ATP-binding</keyword>
<keyword id="KW-0963">Cytoplasm</keyword>
<keyword id="KW-0436">Ligase</keyword>
<keyword id="KW-0547">Nucleotide-binding</keyword>
<keyword id="KW-0648">Protein biosynthesis</keyword>
<keyword id="KW-1185">Reference proteome</keyword>
<evidence type="ECO:0000255" key="1">
    <source>
        <dbReference type="HAMAP-Rule" id="MF_00176"/>
    </source>
</evidence>
<reference key="1">
    <citation type="submission" date="2008-02" db="EMBL/GenBank/DDBJ databases">
        <title>Complete sequence of Shewanella woodyi ATCC 51908.</title>
        <authorList>
            <consortium name="US DOE Joint Genome Institute"/>
            <person name="Copeland A."/>
            <person name="Lucas S."/>
            <person name="Lapidus A."/>
            <person name="Glavina del Rio T."/>
            <person name="Dalin E."/>
            <person name="Tice H."/>
            <person name="Bruce D."/>
            <person name="Goodwin L."/>
            <person name="Pitluck S."/>
            <person name="Sims D."/>
            <person name="Brettin T."/>
            <person name="Detter J.C."/>
            <person name="Han C."/>
            <person name="Kuske C.R."/>
            <person name="Schmutz J."/>
            <person name="Larimer F."/>
            <person name="Land M."/>
            <person name="Hauser L."/>
            <person name="Kyrpides N."/>
            <person name="Lykidis A."/>
            <person name="Zhao J.-S."/>
            <person name="Richardson P."/>
        </authorList>
    </citation>
    <scope>NUCLEOTIDE SEQUENCE [LARGE SCALE GENOMIC DNA]</scope>
    <source>
        <strain>ATCC 51908 / MS32</strain>
    </source>
</reference>
<dbReference type="EC" id="6.1.1.11" evidence="1"/>
<dbReference type="EMBL" id="CP000961">
    <property type="protein sequence ID" value="ACA86756.1"/>
    <property type="molecule type" value="Genomic_DNA"/>
</dbReference>
<dbReference type="RefSeq" id="WP_012325098.1">
    <property type="nucleotide sequence ID" value="NC_010506.1"/>
</dbReference>
<dbReference type="SMR" id="B1KG49"/>
<dbReference type="STRING" id="392500.Swoo_2479"/>
<dbReference type="KEGG" id="swd:Swoo_2479"/>
<dbReference type="eggNOG" id="COG0172">
    <property type="taxonomic scope" value="Bacteria"/>
</dbReference>
<dbReference type="HOGENOM" id="CLU_023797_1_1_6"/>
<dbReference type="UniPathway" id="UPA00906">
    <property type="reaction ID" value="UER00895"/>
</dbReference>
<dbReference type="Proteomes" id="UP000002168">
    <property type="component" value="Chromosome"/>
</dbReference>
<dbReference type="GO" id="GO:0005737">
    <property type="term" value="C:cytoplasm"/>
    <property type="evidence" value="ECO:0007669"/>
    <property type="project" value="UniProtKB-SubCell"/>
</dbReference>
<dbReference type="GO" id="GO:0005524">
    <property type="term" value="F:ATP binding"/>
    <property type="evidence" value="ECO:0007669"/>
    <property type="project" value="UniProtKB-UniRule"/>
</dbReference>
<dbReference type="GO" id="GO:0004828">
    <property type="term" value="F:serine-tRNA ligase activity"/>
    <property type="evidence" value="ECO:0007669"/>
    <property type="project" value="UniProtKB-UniRule"/>
</dbReference>
<dbReference type="GO" id="GO:0016260">
    <property type="term" value="P:selenocysteine biosynthetic process"/>
    <property type="evidence" value="ECO:0007669"/>
    <property type="project" value="UniProtKB-UniRule"/>
</dbReference>
<dbReference type="GO" id="GO:0006434">
    <property type="term" value="P:seryl-tRNA aminoacylation"/>
    <property type="evidence" value="ECO:0007669"/>
    <property type="project" value="UniProtKB-UniRule"/>
</dbReference>
<dbReference type="CDD" id="cd00770">
    <property type="entry name" value="SerRS_core"/>
    <property type="match status" value="1"/>
</dbReference>
<dbReference type="Gene3D" id="3.30.930.10">
    <property type="entry name" value="Bira Bifunctional Protein, Domain 2"/>
    <property type="match status" value="1"/>
</dbReference>
<dbReference type="Gene3D" id="1.10.287.40">
    <property type="entry name" value="Serine-tRNA synthetase, tRNA binding domain"/>
    <property type="match status" value="1"/>
</dbReference>
<dbReference type="HAMAP" id="MF_00176">
    <property type="entry name" value="Ser_tRNA_synth_type1"/>
    <property type="match status" value="1"/>
</dbReference>
<dbReference type="InterPro" id="IPR002314">
    <property type="entry name" value="aa-tRNA-synt_IIb"/>
</dbReference>
<dbReference type="InterPro" id="IPR006195">
    <property type="entry name" value="aa-tRNA-synth_II"/>
</dbReference>
<dbReference type="InterPro" id="IPR045864">
    <property type="entry name" value="aa-tRNA-synth_II/BPL/LPL"/>
</dbReference>
<dbReference type="InterPro" id="IPR002317">
    <property type="entry name" value="Ser-tRNA-ligase_type_1"/>
</dbReference>
<dbReference type="InterPro" id="IPR015866">
    <property type="entry name" value="Ser-tRNA-synth_1_N"/>
</dbReference>
<dbReference type="InterPro" id="IPR042103">
    <property type="entry name" value="SerRS_1_N_sf"/>
</dbReference>
<dbReference type="InterPro" id="IPR033729">
    <property type="entry name" value="SerRS_core"/>
</dbReference>
<dbReference type="InterPro" id="IPR010978">
    <property type="entry name" value="tRNA-bd_arm"/>
</dbReference>
<dbReference type="NCBIfam" id="TIGR00414">
    <property type="entry name" value="serS"/>
    <property type="match status" value="1"/>
</dbReference>
<dbReference type="PANTHER" id="PTHR43697:SF1">
    <property type="entry name" value="SERINE--TRNA LIGASE"/>
    <property type="match status" value="1"/>
</dbReference>
<dbReference type="PANTHER" id="PTHR43697">
    <property type="entry name" value="SERYL-TRNA SYNTHETASE"/>
    <property type="match status" value="1"/>
</dbReference>
<dbReference type="Pfam" id="PF02403">
    <property type="entry name" value="Seryl_tRNA_N"/>
    <property type="match status" value="1"/>
</dbReference>
<dbReference type="Pfam" id="PF00587">
    <property type="entry name" value="tRNA-synt_2b"/>
    <property type="match status" value="1"/>
</dbReference>
<dbReference type="PIRSF" id="PIRSF001529">
    <property type="entry name" value="Ser-tRNA-synth_IIa"/>
    <property type="match status" value="1"/>
</dbReference>
<dbReference type="PRINTS" id="PR00981">
    <property type="entry name" value="TRNASYNTHSER"/>
</dbReference>
<dbReference type="SUPFAM" id="SSF55681">
    <property type="entry name" value="Class II aaRS and biotin synthetases"/>
    <property type="match status" value="1"/>
</dbReference>
<dbReference type="SUPFAM" id="SSF46589">
    <property type="entry name" value="tRNA-binding arm"/>
    <property type="match status" value="1"/>
</dbReference>
<dbReference type="PROSITE" id="PS50862">
    <property type="entry name" value="AA_TRNA_LIGASE_II"/>
    <property type="match status" value="1"/>
</dbReference>